<feature type="chain" id="PRO_0000335511" description="Translation initiation factor IF-2">
    <location>
        <begin position="1"/>
        <end position="999"/>
    </location>
</feature>
<feature type="domain" description="tr-type G">
    <location>
        <begin position="490"/>
        <end position="662"/>
    </location>
</feature>
<feature type="region of interest" description="Disordered" evidence="3">
    <location>
        <begin position="50"/>
        <end position="407"/>
    </location>
</feature>
<feature type="region of interest" description="G1" evidence="1">
    <location>
        <begin position="499"/>
        <end position="506"/>
    </location>
</feature>
<feature type="region of interest" description="G2" evidence="1">
    <location>
        <begin position="524"/>
        <end position="528"/>
    </location>
</feature>
<feature type="region of interest" description="G3" evidence="1">
    <location>
        <begin position="549"/>
        <end position="552"/>
    </location>
</feature>
<feature type="region of interest" description="G4" evidence="1">
    <location>
        <begin position="603"/>
        <end position="606"/>
    </location>
</feature>
<feature type="region of interest" description="G5" evidence="1">
    <location>
        <begin position="639"/>
        <end position="641"/>
    </location>
</feature>
<feature type="compositionally biased region" description="Pro residues" evidence="3">
    <location>
        <begin position="60"/>
        <end position="89"/>
    </location>
</feature>
<feature type="compositionally biased region" description="Pro residues" evidence="3">
    <location>
        <begin position="96"/>
        <end position="121"/>
    </location>
</feature>
<feature type="compositionally biased region" description="Low complexity" evidence="3">
    <location>
        <begin position="136"/>
        <end position="162"/>
    </location>
</feature>
<feature type="compositionally biased region" description="Basic and acidic residues" evidence="3">
    <location>
        <begin position="163"/>
        <end position="173"/>
    </location>
</feature>
<feature type="compositionally biased region" description="Pro residues" evidence="3">
    <location>
        <begin position="179"/>
        <end position="194"/>
    </location>
</feature>
<feature type="compositionally biased region" description="Low complexity" evidence="3">
    <location>
        <begin position="213"/>
        <end position="222"/>
    </location>
</feature>
<feature type="compositionally biased region" description="Pro residues" evidence="3">
    <location>
        <begin position="244"/>
        <end position="266"/>
    </location>
</feature>
<feature type="compositionally biased region" description="Gly residues" evidence="3">
    <location>
        <begin position="275"/>
        <end position="367"/>
    </location>
</feature>
<feature type="compositionally biased region" description="Basic residues" evidence="3">
    <location>
        <begin position="371"/>
        <end position="380"/>
    </location>
</feature>
<feature type="compositionally biased region" description="Polar residues" evidence="3">
    <location>
        <begin position="388"/>
        <end position="405"/>
    </location>
</feature>
<feature type="binding site" evidence="2">
    <location>
        <begin position="499"/>
        <end position="506"/>
    </location>
    <ligand>
        <name>GTP</name>
        <dbReference type="ChEBI" id="CHEBI:37565"/>
    </ligand>
</feature>
<feature type="binding site" evidence="2">
    <location>
        <begin position="549"/>
        <end position="553"/>
    </location>
    <ligand>
        <name>GTP</name>
        <dbReference type="ChEBI" id="CHEBI:37565"/>
    </ligand>
</feature>
<feature type="binding site" evidence="2">
    <location>
        <begin position="603"/>
        <end position="606"/>
    </location>
    <ligand>
        <name>GTP</name>
        <dbReference type="ChEBI" id="CHEBI:37565"/>
    </ligand>
</feature>
<protein>
    <recommendedName>
        <fullName evidence="2">Translation initiation factor IF-2</fullName>
    </recommendedName>
</protein>
<comment type="function">
    <text evidence="2">One of the essential components for the initiation of protein synthesis. Protects formylmethionyl-tRNA from spontaneous hydrolysis and promotes its binding to the 30S ribosomal subunits. Also involved in the hydrolysis of GTP during the formation of the 70S ribosomal complex.</text>
</comment>
<comment type="subcellular location">
    <subcellularLocation>
        <location evidence="2">Cytoplasm</location>
    </subcellularLocation>
</comment>
<comment type="similarity">
    <text evidence="2">Belongs to the TRAFAC class translation factor GTPase superfamily. Classic translation factor GTPase family. IF-2 subfamily.</text>
</comment>
<organism>
    <name type="scientific">Salinispora tropica (strain ATCC BAA-916 / DSM 44818 / JCM 13857 / NBRC 105044 / CNB-440)</name>
    <dbReference type="NCBI Taxonomy" id="369723"/>
    <lineage>
        <taxon>Bacteria</taxon>
        <taxon>Bacillati</taxon>
        <taxon>Actinomycetota</taxon>
        <taxon>Actinomycetes</taxon>
        <taxon>Micromonosporales</taxon>
        <taxon>Micromonosporaceae</taxon>
        <taxon>Salinispora</taxon>
    </lineage>
</organism>
<sequence length="999" mass="102374">MAGKARVHELAKELGVESKTVLAKLKEMGEFVKSASSTVEAPVARRLRNAFVNNTGSPAPAAPPAATPPTPTPTPTPPRTPTPAPPPGGPRVTAKPMPPRRPGAPTPGPKPKGPVPGPPQSATPAAKPASAHDIEVAAAEARAAALKAEQEAAVKAAQAARQQQRDNVRREPPTEGGPRPGPRPGPGAMPPRPGSPAAGRSGGPTPGPGPRSGGRPPARGAGNNPFGIQGGQQRPPAAGAGGPRPSPASMPPRPSPASMPPRPSPASMPSQRPGRPGGPGSGRPGAGAGRPGGGGGGGGGYRGGGGGGGGGYRGGPGGGGGGGGGGGYRGGPGGGGGGFRGGPGGGRPGGGGRGRGGGAAGAFGRPGGRPTRGRKSKKQRRQEFDNLSAPTMSSGAPRGQGQTVRLSRGASLSDFADKINANPGSLVQEMFNLGEMVTATQSCSDDTLLLLGEHLGFVVQIVSPEDEDRELLAQFNIDLDAEVAEDRLVSRPPVVTVMGHVDHGKTKLLDAIRKANVVAGEAGGITQHIGAYQVHVPHDDQDRAITFIDTPGHEAFTAMRARGAQVTDIVILVVAADDGVMPQTIEALNHAKAADVPIVVAVNKIDKPDANPDKVRQQLTEYGLVAEEYGGDTMFVNVAAKPGTGIDSLLEAVLLTADASLELTAPTDGPAQGVAIEAHLDKGRGAVATVLVQKGTLRAGDSIVAGGAHGRVRAMLDENGNQVAEAGPSRPVLVLGLTAVPGAGDTFLAAEDDRTVRQIAEQRQARRRAAAFANSRGRATLETLMEQLKAGEKTSLNLVLKGDVSGSVEALEDALFNLDIPEEVQLRIIHRGVGSITESDVMLASASSEAVTIIGFNVRAANKVREMADREGVEIRYYTVIYQAIEEIEAALKGLLKPEYEEVELGTAEVREVFRSSKVGNISGCIVRSGLLRRNAKARLLRDGAVVADNLTIGSLKRFKDDATEVREGFECGLTLAGYNNVQVGDVIETFEMREKARV</sequence>
<gene>
    <name evidence="2" type="primary">infB</name>
    <name type="ordered locus">Strop_1370</name>
</gene>
<name>IF2_SALTO</name>
<evidence type="ECO:0000250" key="1"/>
<evidence type="ECO:0000255" key="2">
    <source>
        <dbReference type="HAMAP-Rule" id="MF_00100"/>
    </source>
</evidence>
<evidence type="ECO:0000256" key="3">
    <source>
        <dbReference type="SAM" id="MobiDB-lite"/>
    </source>
</evidence>
<accession>A4X4N7</accession>
<keyword id="KW-0963">Cytoplasm</keyword>
<keyword id="KW-0342">GTP-binding</keyword>
<keyword id="KW-0396">Initiation factor</keyword>
<keyword id="KW-0547">Nucleotide-binding</keyword>
<keyword id="KW-0648">Protein biosynthesis</keyword>
<keyword id="KW-1185">Reference proteome</keyword>
<reference key="1">
    <citation type="journal article" date="2007" name="Proc. Natl. Acad. Sci. U.S.A.">
        <title>Genome sequencing reveals complex secondary metabolome in the marine actinomycete Salinispora tropica.</title>
        <authorList>
            <person name="Udwary D.W."/>
            <person name="Zeigler L."/>
            <person name="Asolkar R.N."/>
            <person name="Singan V."/>
            <person name="Lapidus A."/>
            <person name="Fenical W."/>
            <person name="Jensen P.R."/>
            <person name="Moore B.S."/>
        </authorList>
    </citation>
    <scope>NUCLEOTIDE SEQUENCE [LARGE SCALE GENOMIC DNA]</scope>
    <source>
        <strain>ATCC BAA-916 / DSM 44818 / JCM 13857 / NBRC 105044 / CNB-440</strain>
    </source>
</reference>
<proteinExistence type="inferred from homology"/>
<dbReference type="EMBL" id="CP000667">
    <property type="protein sequence ID" value="ABP53837.1"/>
    <property type="molecule type" value="Genomic_DNA"/>
</dbReference>
<dbReference type="RefSeq" id="WP_011905269.1">
    <property type="nucleotide sequence ID" value="NC_009380.1"/>
</dbReference>
<dbReference type="SMR" id="A4X4N7"/>
<dbReference type="STRING" id="369723.Strop_1370"/>
<dbReference type="KEGG" id="stp:Strop_1370"/>
<dbReference type="PATRIC" id="fig|369723.5.peg.1396"/>
<dbReference type="eggNOG" id="COG0532">
    <property type="taxonomic scope" value="Bacteria"/>
</dbReference>
<dbReference type="HOGENOM" id="CLU_006301_9_1_11"/>
<dbReference type="Proteomes" id="UP000000235">
    <property type="component" value="Chromosome"/>
</dbReference>
<dbReference type="GO" id="GO:0005829">
    <property type="term" value="C:cytosol"/>
    <property type="evidence" value="ECO:0007669"/>
    <property type="project" value="TreeGrafter"/>
</dbReference>
<dbReference type="GO" id="GO:0005525">
    <property type="term" value="F:GTP binding"/>
    <property type="evidence" value="ECO:0007669"/>
    <property type="project" value="UniProtKB-KW"/>
</dbReference>
<dbReference type="GO" id="GO:0003924">
    <property type="term" value="F:GTPase activity"/>
    <property type="evidence" value="ECO:0007669"/>
    <property type="project" value="UniProtKB-UniRule"/>
</dbReference>
<dbReference type="GO" id="GO:0003743">
    <property type="term" value="F:translation initiation factor activity"/>
    <property type="evidence" value="ECO:0007669"/>
    <property type="project" value="UniProtKB-UniRule"/>
</dbReference>
<dbReference type="CDD" id="cd01887">
    <property type="entry name" value="IF2_eIF5B"/>
    <property type="match status" value="1"/>
</dbReference>
<dbReference type="CDD" id="cd03702">
    <property type="entry name" value="IF2_mtIF2_II"/>
    <property type="match status" value="1"/>
</dbReference>
<dbReference type="CDD" id="cd03692">
    <property type="entry name" value="mtIF2_IVc"/>
    <property type="match status" value="1"/>
</dbReference>
<dbReference type="FunFam" id="2.40.30.10:FF:000007">
    <property type="entry name" value="Translation initiation factor IF-2"/>
    <property type="match status" value="1"/>
</dbReference>
<dbReference type="FunFam" id="2.40.30.10:FF:000008">
    <property type="entry name" value="Translation initiation factor IF-2"/>
    <property type="match status" value="1"/>
</dbReference>
<dbReference type="FunFam" id="3.40.50.10050:FF:000001">
    <property type="entry name" value="Translation initiation factor IF-2"/>
    <property type="match status" value="1"/>
</dbReference>
<dbReference type="FunFam" id="3.40.50.300:FF:000019">
    <property type="entry name" value="Translation initiation factor IF-2"/>
    <property type="match status" value="1"/>
</dbReference>
<dbReference type="Gene3D" id="1.10.10.2480">
    <property type="match status" value="1"/>
</dbReference>
<dbReference type="Gene3D" id="3.40.50.300">
    <property type="entry name" value="P-loop containing nucleotide triphosphate hydrolases"/>
    <property type="match status" value="1"/>
</dbReference>
<dbReference type="Gene3D" id="2.40.30.10">
    <property type="entry name" value="Translation factors"/>
    <property type="match status" value="2"/>
</dbReference>
<dbReference type="Gene3D" id="3.40.50.10050">
    <property type="entry name" value="Translation initiation factor IF- 2, domain 3"/>
    <property type="match status" value="1"/>
</dbReference>
<dbReference type="HAMAP" id="MF_00100_B">
    <property type="entry name" value="IF_2_B"/>
    <property type="match status" value="1"/>
</dbReference>
<dbReference type="InterPro" id="IPR053905">
    <property type="entry name" value="EF-G-like_DII"/>
</dbReference>
<dbReference type="InterPro" id="IPR044145">
    <property type="entry name" value="IF2_II"/>
</dbReference>
<dbReference type="InterPro" id="IPR006847">
    <property type="entry name" value="IF2_N"/>
</dbReference>
<dbReference type="InterPro" id="IPR027417">
    <property type="entry name" value="P-loop_NTPase"/>
</dbReference>
<dbReference type="InterPro" id="IPR005225">
    <property type="entry name" value="Small_GTP-bd"/>
</dbReference>
<dbReference type="InterPro" id="IPR000795">
    <property type="entry name" value="T_Tr_GTP-bd_dom"/>
</dbReference>
<dbReference type="InterPro" id="IPR000178">
    <property type="entry name" value="TF_IF2_bacterial-like"/>
</dbReference>
<dbReference type="InterPro" id="IPR015760">
    <property type="entry name" value="TIF_IF2"/>
</dbReference>
<dbReference type="InterPro" id="IPR023115">
    <property type="entry name" value="TIF_IF2_dom3"/>
</dbReference>
<dbReference type="InterPro" id="IPR036925">
    <property type="entry name" value="TIF_IF2_dom3_sf"/>
</dbReference>
<dbReference type="InterPro" id="IPR009000">
    <property type="entry name" value="Transl_B-barrel_sf"/>
</dbReference>
<dbReference type="NCBIfam" id="TIGR00487">
    <property type="entry name" value="IF-2"/>
    <property type="match status" value="1"/>
</dbReference>
<dbReference type="NCBIfam" id="TIGR00231">
    <property type="entry name" value="small_GTP"/>
    <property type="match status" value="1"/>
</dbReference>
<dbReference type="PANTHER" id="PTHR43381:SF5">
    <property type="entry name" value="TR-TYPE G DOMAIN-CONTAINING PROTEIN"/>
    <property type="match status" value="1"/>
</dbReference>
<dbReference type="PANTHER" id="PTHR43381">
    <property type="entry name" value="TRANSLATION INITIATION FACTOR IF-2-RELATED"/>
    <property type="match status" value="1"/>
</dbReference>
<dbReference type="Pfam" id="PF22042">
    <property type="entry name" value="EF-G_D2"/>
    <property type="match status" value="1"/>
</dbReference>
<dbReference type="Pfam" id="PF00009">
    <property type="entry name" value="GTP_EFTU"/>
    <property type="match status" value="1"/>
</dbReference>
<dbReference type="Pfam" id="PF11987">
    <property type="entry name" value="IF-2"/>
    <property type="match status" value="1"/>
</dbReference>
<dbReference type="Pfam" id="PF04760">
    <property type="entry name" value="IF2_N"/>
    <property type="match status" value="1"/>
</dbReference>
<dbReference type="PRINTS" id="PR01217">
    <property type="entry name" value="PRICHEXTENSN"/>
</dbReference>
<dbReference type="SUPFAM" id="SSF52156">
    <property type="entry name" value="Initiation factor IF2/eIF5b, domain 3"/>
    <property type="match status" value="1"/>
</dbReference>
<dbReference type="SUPFAM" id="SSF52540">
    <property type="entry name" value="P-loop containing nucleoside triphosphate hydrolases"/>
    <property type="match status" value="1"/>
</dbReference>
<dbReference type="SUPFAM" id="SSF50447">
    <property type="entry name" value="Translation proteins"/>
    <property type="match status" value="2"/>
</dbReference>
<dbReference type="PROSITE" id="PS51722">
    <property type="entry name" value="G_TR_2"/>
    <property type="match status" value="1"/>
</dbReference>
<dbReference type="PROSITE" id="PS01176">
    <property type="entry name" value="IF2"/>
    <property type="match status" value="1"/>
</dbReference>